<keyword id="KW-0131">Cell cycle</keyword>
<keyword id="KW-0132">Cell division</keyword>
<keyword id="KW-0227">DNA damage</keyword>
<keyword id="KW-0717">Septation</keyword>
<keyword id="KW-0742">SOS response</keyword>
<feature type="chain" id="PRO_0000343984" description="Cell division inhibitor SulA">
    <location>
        <begin position="1"/>
        <end position="168"/>
    </location>
</feature>
<feature type="region of interest" description="FtsZ binding" evidence="1">
    <location>
        <begin position="106"/>
        <end position="112"/>
    </location>
</feature>
<feature type="region of interest" description="Lon protease binding" evidence="1">
    <location>
        <begin position="161"/>
        <end position="168"/>
    </location>
</feature>
<feature type="site" description="Essential for degradation by Lon protease" evidence="1">
    <location>
        <position position="168"/>
    </location>
</feature>
<accession>Q66CE9</accession>
<name>SULA_YERPS</name>
<comment type="function">
    <text evidence="1">Component of the SOS system and an inhibitor of cell division. Accumulation of SulA causes rapid cessation of cell division and the appearance of long, non-septate filaments. In the presence of GTP, binds a polymerization-competent form of FtsZ in a 1:1 ratio, thus inhibiting FtsZ polymerization and therefore preventing it from participating in the assembly of the Z ring. This mechanism prevents the premature segregation of damaged DNA to daughter cells during cell division.</text>
</comment>
<comment type="subunit">
    <text evidence="1">Interacts with FtsZ.</text>
</comment>
<comment type="induction">
    <text evidence="1">By DNA damage, as part of the SOS response.</text>
</comment>
<comment type="PTM">
    <text evidence="1">Is rapidly cleaved and degraded by the Lon protease once DNA damage is repaired.</text>
</comment>
<comment type="similarity">
    <text evidence="1">Belongs to the SulA family.</text>
</comment>
<proteinExistence type="inferred from homology"/>
<evidence type="ECO:0000255" key="1">
    <source>
        <dbReference type="HAMAP-Rule" id="MF_01179"/>
    </source>
</evidence>
<gene>
    <name evidence="1" type="primary">sulA</name>
    <name type="ordered locus">YPTB1454</name>
</gene>
<protein>
    <recommendedName>
        <fullName evidence="1">Cell division inhibitor SulA</fullName>
    </recommendedName>
</protein>
<organism>
    <name type="scientific">Yersinia pseudotuberculosis serotype I (strain IP32953)</name>
    <dbReference type="NCBI Taxonomy" id="273123"/>
    <lineage>
        <taxon>Bacteria</taxon>
        <taxon>Pseudomonadati</taxon>
        <taxon>Pseudomonadota</taxon>
        <taxon>Gammaproteobacteria</taxon>
        <taxon>Enterobacterales</taxon>
        <taxon>Yersiniaceae</taxon>
        <taxon>Yersinia</taxon>
    </lineage>
</organism>
<sequence length="168" mass="19030">MRTQSLKPYHANYHSLTTNDSPARVDAPTDSGLISEFVYSENQPVVTQLLLPLLQQLSKQSRWLLWLTPQQKLSRSWLKQSGLPINKVVQLRQINPLSTVEAMEKALLTGNYSVVLGWLPELTEDDRIRLRLAAKLGNAYGFVMRPLNDTKVGSGQCATLKIHSYLYH</sequence>
<reference key="1">
    <citation type="journal article" date="2004" name="Proc. Natl. Acad. Sci. U.S.A.">
        <title>Insights into the evolution of Yersinia pestis through whole-genome comparison with Yersinia pseudotuberculosis.</title>
        <authorList>
            <person name="Chain P.S.G."/>
            <person name="Carniel E."/>
            <person name="Larimer F.W."/>
            <person name="Lamerdin J."/>
            <person name="Stoutland P.O."/>
            <person name="Regala W.M."/>
            <person name="Georgescu A.M."/>
            <person name="Vergez L.M."/>
            <person name="Land M.L."/>
            <person name="Motin V.L."/>
            <person name="Brubaker R.R."/>
            <person name="Fowler J."/>
            <person name="Hinnebusch J."/>
            <person name="Marceau M."/>
            <person name="Medigue C."/>
            <person name="Simonet M."/>
            <person name="Chenal-Francisque V."/>
            <person name="Souza B."/>
            <person name="Dacheux D."/>
            <person name="Elliott J.M."/>
            <person name="Derbise A."/>
            <person name="Hauser L.J."/>
            <person name="Garcia E."/>
        </authorList>
    </citation>
    <scope>NUCLEOTIDE SEQUENCE [LARGE SCALE GENOMIC DNA]</scope>
    <source>
        <strain>IP32953</strain>
    </source>
</reference>
<dbReference type="EMBL" id="BX936398">
    <property type="protein sequence ID" value="CAH20694.1"/>
    <property type="molecule type" value="Genomic_DNA"/>
</dbReference>
<dbReference type="RefSeq" id="WP_011192069.1">
    <property type="nucleotide sequence ID" value="NC_006155.1"/>
</dbReference>
<dbReference type="SMR" id="Q66CE9"/>
<dbReference type="KEGG" id="ypo:BZ17_1064"/>
<dbReference type="KEGG" id="yps:YPTB1454"/>
<dbReference type="PATRIC" id="fig|273123.14.peg.1129"/>
<dbReference type="Proteomes" id="UP000001011">
    <property type="component" value="Chromosome"/>
</dbReference>
<dbReference type="GO" id="GO:0000917">
    <property type="term" value="P:division septum assembly"/>
    <property type="evidence" value="ECO:0007669"/>
    <property type="project" value="UniProtKB-KW"/>
</dbReference>
<dbReference type="GO" id="GO:0006281">
    <property type="term" value="P:DNA repair"/>
    <property type="evidence" value="ECO:0007669"/>
    <property type="project" value="TreeGrafter"/>
</dbReference>
<dbReference type="GO" id="GO:0051782">
    <property type="term" value="P:negative regulation of cell division"/>
    <property type="evidence" value="ECO:0007669"/>
    <property type="project" value="UniProtKB-UniRule"/>
</dbReference>
<dbReference type="GO" id="GO:0009432">
    <property type="term" value="P:SOS response"/>
    <property type="evidence" value="ECO:0007669"/>
    <property type="project" value="UniProtKB-UniRule"/>
</dbReference>
<dbReference type="FunFam" id="3.40.50.300:FF:000417">
    <property type="entry name" value="Cell division inhibitor SulA"/>
    <property type="match status" value="1"/>
</dbReference>
<dbReference type="Gene3D" id="3.40.50.300">
    <property type="entry name" value="P-loop containing nucleotide triphosphate hydrolases"/>
    <property type="match status" value="1"/>
</dbReference>
<dbReference type="HAMAP" id="MF_01179">
    <property type="entry name" value="SulA"/>
    <property type="match status" value="1"/>
</dbReference>
<dbReference type="InterPro" id="IPR004596">
    <property type="entry name" value="Cell_div_suppressor_SulA"/>
</dbReference>
<dbReference type="InterPro" id="IPR027417">
    <property type="entry name" value="P-loop_NTPase"/>
</dbReference>
<dbReference type="InterPro" id="IPR050356">
    <property type="entry name" value="SulA_CellDiv_inhibitor"/>
</dbReference>
<dbReference type="InterPro" id="IPR047696">
    <property type="entry name" value="SulA_enterobact"/>
</dbReference>
<dbReference type="NCBIfam" id="NF007892">
    <property type="entry name" value="PRK10595.1"/>
    <property type="match status" value="1"/>
</dbReference>
<dbReference type="NCBIfam" id="TIGR00623">
    <property type="entry name" value="SOS_SulA_coli"/>
    <property type="match status" value="1"/>
</dbReference>
<dbReference type="PANTHER" id="PTHR35369">
    <property type="entry name" value="BLR3025 PROTEIN-RELATED"/>
    <property type="match status" value="1"/>
</dbReference>
<dbReference type="PANTHER" id="PTHR35369:SF4">
    <property type="entry name" value="CELL DIVISION INHIBITOR SULA"/>
    <property type="match status" value="1"/>
</dbReference>
<dbReference type="Pfam" id="PF03846">
    <property type="entry name" value="SulA"/>
    <property type="match status" value="1"/>
</dbReference>
<dbReference type="PIRSF" id="PIRSF003093">
    <property type="entry name" value="SulA"/>
    <property type="match status" value="1"/>
</dbReference>
<dbReference type="SUPFAM" id="SSF52540">
    <property type="entry name" value="P-loop containing nucleoside triphosphate hydrolases"/>
    <property type="match status" value="1"/>
</dbReference>